<gene>
    <name type="primary">Mterf1a</name>
    <name type="synonym">Mterf</name>
    <name type="synonym">Mterf1</name>
</gene>
<proteinExistence type="evidence at transcript level"/>
<organism>
    <name type="scientific">Mus musculus</name>
    <name type="common">Mouse</name>
    <dbReference type="NCBI Taxonomy" id="10090"/>
    <lineage>
        <taxon>Eukaryota</taxon>
        <taxon>Metazoa</taxon>
        <taxon>Chordata</taxon>
        <taxon>Craniata</taxon>
        <taxon>Vertebrata</taxon>
        <taxon>Euteleostomi</taxon>
        <taxon>Mammalia</taxon>
        <taxon>Eutheria</taxon>
        <taxon>Euarchontoglires</taxon>
        <taxon>Glires</taxon>
        <taxon>Rodentia</taxon>
        <taxon>Myomorpha</taxon>
        <taxon>Muroidea</taxon>
        <taxon>Muridae</taxon>
        <taxon>Murinae</taxon>
        <taxon>Mus</taxon>
        <taxon>Mus</taxon>
    </lineage>
</organism>
<keyword id="KW-0238">DNA-binding</keyword>
<keyword id="KW-0496">Mitochondrion</keyword>
<keyword id="KW-0597">Phosphoprotein</keyword>
<keyword id="KW-1185">Reference proteome</keyword>
<keyword id="KW-0677">Repeat</keyword>
<keyword id="KW-0804">Transcription</keyword>
<keyword id="KW-0805">Transcription regulation</keyword>
<keyword id="KW-0806">Transcription termination</keyword>
<keyword id="KW-0809">Transit peptide</keyword>
<feature type="transit peptide" description="Mitochondrion" evidence="2">
    <location>
        <begin position="1"/>
        <end position="37"/>
    </location>
</feature>
<feature type="chain" id="PRO_0000021780" description="Transcription termination factor 1a, mitochondrial">
    <location>
        <begin position="38"/>
        <end position="379"/>
    </location>
</feature>
<feature type="region of interest" description="Interaction with DNA" evidence="1">
    <location>
        <begin position="151"/>
        <end position="152"/>
    </location>
</feature>
<feature type="region of interest" description="Interaction with DNA" evidence="1">
    <location>
        <begin position="229"/>
        <end position="233"/>
    </location>
</feature>
<feature type="region of interest" description="Interaction with DNA" evidence="1">
    <location>
        <begin position="306"/>
        <end position="313"/>
    </location>
</feature>
<feature type="region of interest" description="Interaction with DNA" evidence="1">
    <location>
        <begin position="337"/>
        <end position="340"/>
    </location>
</feature>
<feature type="region of interest" description="Interaction with DNA" evidence="1">
    <location>
        <begin position="366"/>
        <end position="373"/>
    </location>
</feature>
<feature type="site" description="Interaction with DNA" evidence="1">
    <location>
        <position position="144"/>
    </location>
</feature>
<feature type="site" description="Interaction with DNA" evidence="1">
    <location>
        <position position="184"/>
    </location>
</feature>
<feature type="site" description="Interaction with DNA" evidence="1">
    <location>
        <position position="332"/>
    </location>
</feature>
<feature type="sequence conflict" description="In Ref. 3; AAH82778/AAH94442." evidence="5" ref="3">
    <original>D</original>
    <variation>G</variation>
    <location>
        <position position="19"/>
    </location>
</feature>
<feature type="sequence conflict" description="In Ref. 3; AAH82778/AAH94442." evidence="5" ref="3">
    <original>A</original>
    <variation>V</variation>
    <location>
        <position position="40"/>
    </location>
</feature>
<feature type="sequence conflict" description="In Ref. 3; AAH82778/AAH94442." evidence="5" ref="3">
    <original>L</original>
    <variation>I</variation>
    <location>
        <position position="91"/>
    </location>
</feature>
<feature type="sequence conflict" description="In Ref. 3; AAH82778/AAH94442." evidence="5" ref="3">
    <original>D</original>
    <variation>H</variation>
    <location>
        <position position="126"/>
    </location>
</feature>
<accession>Q8CHZ9</accession>
<accession>Q63ZX5</accession>
<accession>Q8C7T1</accession>
<dbReference type="EMBL" id="AY726770">
    <property type="protein sequence ID" value="AAU26065.1"/>
    <property type="molecule type" value="mRNA"/>
</dbReference>
<dbReference type="EMBL" id="AC027653">
    <property type="status" value="NOT_ANNOTATED_CDS"/>
    <property type="molecule type" value="Genomic_DNA"/>
</dbReference>
<dbReference type="EMBL" id="BC038058">
    <property type="protein sequence ID" value="AAH38058.1"/>
    <property type="molecule type" value="mRNA"/>
</dbReference>
<dbReference type="EMBL" id="BC051251">
    <property type="protein sequence ID" value="AAH51251.1"/>
    <property type="molecule type" value="mRNA"/>
</dbReference>
<dbReference type="EMBL" id="BC082778">
    <property type="protein sequence ID" value="AAH82778.1"/>
    <property type="molecule type" value="mRNA"/>
</dbReference>
<dbReference type="EMBL" id="BC094442">
    <property type="protein sequence ID" value="AAH94442.1"/>
    <property type="molecule type" value="mRNA"/>
</dbReference>
<dbReference type="EMBL" id="AK049308">
    <property type="protein sequence ID" value="BAC33673.1"/>
    <property type="molecule type" value="mRNA"/>
</dbReference>
<dbReference type="CCDS" id="CCDS39003.1"/>
<dbReference type="RefSeq" id="NP_001013041.2">
    <property type="nucleotide sequence ID" value="NM_001013023.2"/>
</dbReference>
<dbReference type="RefSeq" id="NP_742147.1">
    <property type="nucleotide sequence ID" value="NM_172135.2"/>
</dbReference>
<dbReference type="SMR" id="Q8CHZ9"/>
<dbReference type="FunCoup" id="Q8CHZ9">
    <property type="interactions" value="1605"/>
</dbReference>
<dbReference type="IntAct" id="Q8CHZ9">
    <property type="interactions" value="1"/>
</dbReference>
<dbReference type="STRING" id="10090.ENSMUSP00000113306"/>
<dbReference type="iPTMnet" id="Q8CHZ9"/>
<dbReference type="PhosphoSitePlus" id="Q8CHZ9"/>
<dbReference type="PaxDb" id="10090-ENSMUSP00000046017"/>
<dbReference type="PeptideAtlas" id="Q8CHZ9"/>
<dbReference type="ProteomicsDB" id="287631"/>
<dbReference type="Pumba" id="Q8CHZ9"/>
<dbReference type="DNASU" id="545725"/>
<dbReference type="Ensembl" id="ENSMUST00000044746.5">
    <property type="protein sequence ID" value="ENSMUSP00000046017.5"/>
    <property type="gene ID" value="ENSMUSG00000040429.7"/>
</dbReference>
<dbReference type="Ensembl" id="ENSMUST00000117463.2">
    <property type="protein sequence ID" value="ENSMUSP00000113306.2"/>
    <property type="gene ID" value="ENSMUSG00000040429.7"/>
</dbReference>
<dbReference type="GeneID" id="545725"/>
<dbReference type="KEGG" id="mmu:545725"/>
<dbReference type="UCSC" id="uc008why.1">
    <property type="organism name" value="mouse"/>
</dbReference>
<dbReference type="AGR" id="MGI:1918240"/>
<dbReference type="CTD" id="545725"/>
<dbReference type="MGI" id="MGI:1918240">
    <property type="gene designation" value="Mterf1a"/>
</dbReference>
<dbReference type="VEuPathDB" id="HostDB:ENSMUSG00000040429"/>
<dbReference type="eggNOG" id="KOG1267">
    <property type="taxonomic scope" value="Eukaryota"/>
</dbReference>
<dbReference type="GeneTree" id="ENSGT00530000063817"/>
<dbReference type="HOGENOM" id="CLU_058644_0_0_1"/>
<dbReference type="InParanoid" id="Q8CHZ9"/>
<dbReference type="OMA" id="FCHLEER"/>
<dbReference type="OrthoDB" id="637682at2759"/>
<dbReference type="PhylomeDB" id="Q8CHZ9"/>
<dbReference type="TreeFam" id="TF330821"/>
<dbReference type="BioGRID-ORCS" id="545725">
    <property type="hits" value="9 hits in 45 CRISPR screens"/>
</dbReference>
<dbReference type="ChiTaRS" id="Mterf1a">
    <property type="organism name" value="mouse"/>
</dbReference>
<dbReference type="PRO" id="PR:Q8CHZ9"/>
<dbReference type="Proteomes" id="UP000000589">
    <property type="component" value="Chromosome 5"/>
</dbReference>
<dbReference type="RNAct" id="Q8CHZ9">
    <property type="molecule type" value="protein"/>
</dbReference>
<dbReference type="Bgee" id="ENSMUSG00000040429">
    <property type="expression patterns" value="Expressed in embryonic post-anal tail and 65 other cell types or tissues"/>
</dbReference>
<dbReference type="GO" id="GO:0005739">
    <property type="term" value="C:mitochondrion"/>
    <property type="evidence" value="ECO:0000314"/>
    <property type="project" value="MGI"/>
</dbReference>
<dbReference type="GO" id="GO:0003690">
    <property type="term" value="F:double-stranded DNA binding"/>
    <property type="evidence" value="ECO:0000250"/>
    <property type="project" value="UniProtKB"/>
</dbReference>
<dbReference type="GO" id="GO:0032392">
    <property type="term" value="P:DNA geometric change"/>
    <property type="evidence" value="ECO:0000250"/>
    <property type="project" value="UniProtKB"/>
</dbReference>
<dbReference type="GO" id="GO:0006353">
    <property type="term" value="P:DNA-templated transcription termination"/>
    <property type="evidence" value="ECO:0000250"/>
    <property type="project" value="UniProtKB"/>
</dbReference>
<dbReference type="GO" id="GO:0006355">
    <property type="term" value="P:regulation of DNA-templated transcription"/>
    <property type="evidence" value="ECO:0007669"/>
    <property type="project" value="InterPro"/>
</dbReference>
<dbReference type="GO" id="GO:0006393">
    <property type="term" value="P:termination of mitochondrial transcription"/>
    <property type="evidence" value="ECO:0000250"/>
    <property type="project" value="UniProtKB"/>
</dbReference>
<dbReference type="FunFam" id="1.25.70.10:FF:000007">
    <property type="entry name" value="Mitochondrial transcription termination factor 1"/>
    <property type="match status" value="1"/>
</dbReference>
<dbReference type="FunFam" id="1.25.70.10:FF:000003">
    <property type="entry name" value="transcription termination factor 2, mitochondrial"/>
    <property type="match status" value="1"/>
</dbReference>
<dbReference type="Gene3D" id="1.25.70.10">
    <property type="entry name" value="Transcription termination factor 3, mitochondrial"/>
    <property type="match status" value="2"/>
</dbReference>
<dbReference type="InterPro" id="IPR003690">
    <property type="entry name" value="MTERF"/>
</dbReference>
<dbReference type="InterPro" id="IPR038538">
    <property type="entry name" value="MTERF_sf"/>
</dbReference>
<dbReference type="PANTHER" id="PTHR15437:SF2">
    <property type="entry name" value="TRANSCRIPTION TERMINATION FACTOR 1, MITOCHONDRIAL"/>
    <property type="match status" value="1"/>
</dbReference>
<dbReference type="PANTHER" id="PTHR15437">
    <property type="entry name" value="TRANSCRIPTION TERMINATION FACTOR, MITOCHONDRIAL"/>
    <property type="match status" value="1"/>
</dbReference>
<dbReference type="Pfam" id="PF02536">
    <property type="entry name" value="mTERF"/>
    <property type="match status" value="1"/>
</dbReference>
<dbReference type="SMART" id="SM00733">
    <property type="entry name" value="Mterf"/>
    <property type="match status" value="6"/>
</dbReference>
<comment type="function">
    <text evidence="4">Transcription termination factor. Binds to a 28 bp region within the tRNA(Leu(uur)) gene at a position immediately adjacent to and downstream of the 16S rRNA gene; this region comprises a tridecamer sequence critical for directing accurate termination. Binds DNA along the major grove and promotes DNA bending and partial unwinding. Promotes base flipping. Transcription termination activity appears to be polarized with highest specificity for transcripts initiated on the light strand.</text>
</comment>
<comment type="subunit">
    <text evidence="1">Monomer.</text>
</comment>
<comment type="subcellular location">
    <subcellularLocation>
        <location evidence="3">Mitochondrion</location>
    </subcellularLocation>
</comment>
<comment type="tissue specificity">
    <text evidence="3 4">Predominantly expressed in heart and liver, with extremely low levels in other tissues (PubMed:15582606). Expressed strongly in the heart and at lower levels in brain, liver and kidney (PubMed:23562081).</text>
</comment>
<comment type="domain">
    <text evidence="1">Contains nine structural repeats of about 35 residues, where each repeat contains three helices. The repeats form a left-handed superhelical assembly with a solenoid structure that wraps itself around DNA (By similarity).</text>
</comment>
<comment type="PTM">
    <text evidence="1">Phosphoprotein with mostly four phosphate groups. While the DNA-binding activity is unaffected by the phosphorylation state, only the phosphorylated form of the protein is active for termination activity. Functioning seems to be regulated by phosphorylation (By similarity).</text>
</comment>
<comment type="disruption phenotype">
    <text evidence="4">Double knockout of Mterf1a and Mterf1b results in viable animals with no gross phenotype, and normal oxidative phosphorylation capacity. Steady-state mitochondrial DNA levels are normal. There are subtle effects on levels of mitochondrial transcripts: transcripts initiated at the light strand promoter and also downstream of the MTERF binding site are increased, levels of 7S RNA are reduced, while levels of other mitochondrial transcripts are normal.</text>
</comment>
<comment type="similarity">
    <text evidence="5">Belongs to the mTERF family.</text>
</comment>
<protein>
    <recommendedName>
        <fullName>Transcription termination factor 1a, mitochondrial</fullName>
    </recommendedName>
    <alternativeName>
        <fullName>Mitochondrial transcription termination factor 1a</fullName>
        <shortName>mTERF1a</shortName>
    </alternativeName>
</protein>
<evidence type="ECO:0000250" key="1"/>
<evidence type="ECO:0000255" key="2"/>
<evidence type="ECO:0000269" key="3">
    <source>
    </source>
</evidence>
<evidence type="ECO:0000269" key="4">
    <source>
    </source>
</evidence>
<evidence type="ECO:0000305" key="5"/>
<name>MTF1A_MOUSE</name>
<reference key="1">
    <citation type="journal article" date="2005" name="Biochem. Biophys. Res. Commun.">
        <title>Cloning and characterization of mouse mTERF encoding a mitochondrial transcriptional termination factor.</title>
        <authorList>
            <person name="Li X."/>
            <person name="Zhang L.S."/>
            <person name="Guan M.-X."/>
        </authorList>
    </citation>
    <scope>NUCLEOTIDE SEQUENCE [MRNA]</scope>
    <scope>TISSUE SPECIFICITY</scope>
    <scope>SUBCELLULAR LOCATION</scope>
    <source>
        <strain>SWR/J</strain>
        <tissue>Liver</tissue>
    </source>
</reference>
<reference key="2">
    <citation type="journal article" date="2009" name="PLoS Biol.">
        <title>Lineage-specific biology revealed by a finished genome assembly of the mouse.</title>
        <authorList>
            <person name="Church D.M."/>
            <person name="Goodstadt L."/>
            <person name="Hillier L.W."/>
            <person name="Zody M.C."/>
            <person name="Goldstein S."/>
            <person name="She X."/>
            <person name="Bult C.J."/>
            <person name="Agarwala R."/>
            <person name="Cherry J.L."/>
            <person name="DiCuccio M."/>
            <person name="Hlavina W."/>
            <person name="Kapustin Y."/>
            <person name="Meric P."/>
            <person name="Maglott D."/>
            <person name="Birtle Z."/>
            <person name="Marques A.C."/>
            <person name="Graves T."/>
            <person name="Zhou S."/>
            <person name="Teague B."/>
            <person name="Potamousis K."/>
            <person name="Churas C."/>
            <person name="Place M."/>
            <person name="Herschleb J."/>
            <person name="Runnheim R."/>
            <person name="Forrest D."/>
            <person name="Amos-Landgraf J."/>
            <person name="Schwartz D.C."/>
            <person name="Cheng Z."/>
            <person name="Lindblad-Toh K."/>
            <person name="Eichler E.E."/>
            <person name="Ponting C.P."/>
        </authorList>
    </citation>
    <scope>NUCLEOTIDE SEQUENCE [LARGE SCALE GENOMIC DNA]</scope>
    <source>
        <strain>C57BL/6J</strain>
    </source>
</reference>
<reference key="3">
    <citation type="journal article" date="2004" name="Genome Res.">
        <title>The status, quality, and expansion of the NIH full-length cDNA project: the Mammalian Gene Collection (MGC).</title>
        <authorList>
            <consortium name="The MGC Project Team"/>
        </authorList>
    </citation>
    <scope>NUCLEOTIDE SEQUENCE [LARGE SCALE MRNA]</scope>
    <source>
        <strain>Czech II</strain>
        <strain>FVB/N</strain>
        <tissue>Colon</tissue>
        <tissue>Eye</tissue>
        <tissue>Mammary tumor</tissue>
    </source>
</reference>
<reference key="4">
    <citation type="journal article" date="2005" name="Science">
        <title>The transcriptional landscape of the mammalian genome.</title>
        <authorList>
            <person name="Carninci P."/>
            <person name="Kasukawa T."/>
            <person name="Katayama S."/>
            <person name="Gough J."/>
            <person name="Frith M.C."/>
            <person name="Maeda N."/>
            <person name="Oyama R."/>
            <person name="Ravasi T."/>
            <person name="Lenhard B."/>
            <person name="Wells C."/>
            <person name="Kodzius R."/>
            <person name="Shimokawa K."/>
            <person name="Bajic V.B."/>
            <person name="Brenner S.E."/>
            <person name="Batalov S."/>
            <person name="Forrest A.R."/>
            <person name="Zavolan M."/>
            <person name="Davis M.J."/>
            <person name="Wilming L.G."/>
            <person name="Aidinis V."/>
            <person name="Allen J.E."/>
            <person name="Ambesi-Impiombato A."/>
            <person name="Apweiler R."/>
            <person name="Aturaliya R.N."/>
            <person name="Bailey T.L."/>
            <person name="Bansal M."/>
            <person name="Baxter L."/>
            <person name="Beisel K.W."/>
            <person name="Bersano T."/>
            <person name="Bono H."/>
            <person name="Chalk A.M."/>
            <person name="Chiu K.P."/>
            <person name="Choudhary V."/>
            <person name="Christoffels A."/>
            <person name="Clutterbuck D.R."/>
            <person name="Crowe M.L."/>
            <person name="Dalla E."/>
            <person name="Dalrymple B.P."/>
            <person name="de Bono B."/>
            <person name="Della Gatta G."/>
            <person name="di Bernardo D."/>
            <person name="Down T."/>
            <person name="Engstrom P."/>
            <person name="Fagiolini M."/>
            <person name="Faulkner G."/>
            <person name="Fletcher C.F."/>
            <person name="Fukushima T."/>
            <person name="Furuno M."/>
            <person name="Futaki S."/>
            <person name="Gariboldi M."/>
            <person name="Georgii-Hemming P."/>
            <person name="Gingeras T.R."/>
            <person name="Gojobori T."/>
            <person name="Green R.E."/>
            <person name="Gustincich S."/>
            <person name="Harbers M."/>
            <person name="Hayashi Y."/>
            <person name="Hensch T.K."/>
            <person name="Hirokawa N."/>
            <person name="Hill D."/>
            <person name="Huminiecki L."/>
            <person name="Iacono M."/>
            <person name="Ikeo K."/>
            <person name="Iwama A."/>
            <person name="Ishikawa T."/>
            <person name="Jakt M."/>
            <person name="Kanapin A."/>
            <person name="Katoh M."/>
            <person name="Kawasawa Y."/>
            <person name="Kelso J."/>
            <person name="Kitamura H."/>
            <person name="Kitano H."/>
            <person name="Kollias G."/>
            <person name="Krishnan S.P."/>
            <person name="Kruger A."/>
            <person name="Kummerfeld S.K."/>
            <person name="Kurochkin I.V."/>
            <person name="Lareau L.F."/>
            <person name="Lazarevic D."/>
            <person name="Lipovich L."/>
            <person name="Liu J."/>
            <person name="Liuni S."/>
            <person name="McWilliam S."/>
            <person name="Madan Babu M."/>
            <person name="Madera M."/>
            <person name="Marchionni L."/>
            <person name="Matsuda H."/>
            <person name="Matsuzawa S."/>
            <person name="Miki H."/>
            <person name="Mignone F."/>
            <person name="Miyake S."/>
            <person name="Morris K."/>
            <person name="Mottagui-Tabar S."/>
            <person name="Mulder N."/>
            <person name="Nakano N."/>
            <person name="Nakauchi H."/>
            <person name="Ng P."/>
            <person name="Nilsson R."/>
            <person name="Nishiguchi S."/>
            <person name="Nishikawa S."/>
            <person name="Nori F."/>
            <person name="Ohara O."/>
            <person name="Okazaki Y."/>
            <person name="Orlando V."/>
            <person name="Pang K.C."/>
            <person name="Pavan W.J."/>
            <person name="Pavesi G."/>
            <person name="Pesole G."/>
            <person name="Petrovsky N."/>
            <person name="Piazza S."/>
            <person name="Reed J."/>
            <person name="Reid J.F."/>
            <person name="Ring B.Z."/>
            <person name="Ringwald M."/>
            <person name="Rost B."/>
            <person name="Ruan Y."/>
            <person name="Salzberg S.L."/>
            <person name="Sandelin A."/>
            <person name="Schneider C."/>
            <person name="Schoenbach C."/>
            <person name="Sekiguchi K."/>
            <person name="Semple C.A."/>
            <person name="Seno S."/>
            <person name="Sessa L."/>
            <person name="Sheng Y."/>
            <person name="Shibata Y."/>
            <person name="Shimada H."/>
            <person name="Shimada K."/>
            <person name="Silva D."/>
            <person name="Sinclair B."/>
            <person name="Sperling S."/>
            <person name="Stupka E."/>
            <person name="Sugiura K."/>
            <person name="Sultana R."/>
            <person name="Takenaka Y."/>
            <person name="Taki K."/>
            <person name="Tammoja K."/>
            <person name="Tan S.L."/>
            <person name="Tang S."/>
            <person name="Taylor M.S."/>
            <person name="Tegner J."/>
            <person name="Teichmann S.A."/>
            <person name="Ueda H.R."/>
            <person name="van Nimwegen E."/>
            <person name="Verardo R."/>
            <person name="Wei C.L."/>
            <person name="Yagi K."/>
            <person name="Yamanishi H."/>
            <person name="Zabarovsky E."/>
            <person name="Zhu S."/>
            <person name="Zimmer A."/>
            <person name="Hide W."/>
            <person name="Bult C."/>
            <person name="Grimmond S.M."/>
            <person name="Teasdale R.D."/>
            <person name="Liu E.T."/>
            <person name="Brusic V."/>
            <person name="Quackenbush J."/>
            <person name="Wahlestedt C."/>
            <person name="Mattick J.S."/>
            <person name="Hume D.A."/>
            <person name="Kai C."/>
            <person name="Sasaki D."/>
            <person name="Tomaru Y."/>
            <person name="Fukuda S."/>
            <person name="Kanamori-Katayama M."/>
            <person name="Suzuki M."/>
            <person name="Aoki J."/>
            <person name="Arakawa T."/>
            <person name="Iida J."/>
            <person name="Imamura K."/>
            <person name="Itoh M."/>
            <person name="Kato T."/>
            <person name="Kawaji H."/>
            <person name="Kawagashira N."/>
            <person name="Kawashima T."/>
            <person name="Kojima M."/>
            <person name="Kondo S."/>
            <person name="Konno H."/>
            <person name="Nakano K."/>
            <person name="Ninomiya N."/>
            <person name="Nishio T."/>
            <person name="Okada M."/>
            <person name="Plessy C."/>
            <person name="Shibata K."/>
            <person name="Shiraki T."/>
            <person name="Suzuki S."/>
            <person name="Tagami M."/>
            <person name="Waki K."/>
            <person name="Watahiki A."/>
            <person name="Okamura-Oho Y."/>
            <person name="Suzuki H."/>
            <person name="Kawai J."/>
            <person name="Hayashizaki Y."/>
        </authorList>
    </citation>
    <scope>NUCLEOTIDE SEQUENCE [LARGE SCALE MRNA] OF 1-271</scope>
    <source>
        <strain>C57BL/6J</strain>
    </source>
</reference>
<reference key="5">
    <citation type="journal article" date="2013" name="Cell Metab.">
        <title>MTERF1 binds mtDNA to prevent transcriptional interference at the light-strand promoter but is dispensable for rRNA gene transcription regulation.</title>
        <authorList>
            <person name="Terzioglu M."/>
            <person name="Ruzzenente B."/>
            <person name="Harmel J."/>
            <person name="Mourier A."/>
            <person name="Jemt E."/>
            <person name="Lopez M.D."/>
            <person name="Kukat C."/>
            <person name="Stewart J.B."/>
            <person name="Wibom R."/>
            <person name="Meharg C."/>
            <person name="Habermann B."/>
            <person name="Falkenberg M."/>
            <person name="Gustafsson C.M."/>
            <person name="Park C.B."/>
            <person name="Larsson N.G."/>
        </authorList>
    </citation>
    <scope>FUNCTION</scope>
    <scope>TISSUE SPECIFICITY</scope>
    <scope>DISRUPTION PHENOTYPE</scope>
</reference>
<sequence>MASRNIWCVRRNFLFDLRDWMLQYSAEVFLKSISFRPFSAECDSKDKESLEEEREDLLSNLVTMGVDIDMARRRQPGVFNKAVTNEQELKLFLLSKGASDKVIGSIISRYPRAITRTPESLSKRWDLWRKIMASDLEIVNILERSPESFFRSNNNLNLENNIKFLCSVGLTHKCLCRLLTNAPRTFSNSLNLNKQMVEFLQETGMSLGHNDPRDFVRKIISKNPSILIQSTKRVKTNIEFLQSTFNLNKRDLLLLICGPGARILDLSNDCTKKNYTNIRERLLSLGCSEEEVQRFVLSYLNMVFLSEKKFNDKIDCLIEEKISASQIIENPRILDSSINTLKTRIRELSHAGYDLSTSSIALLSWSQRRYEAKLKRLCG</sequence>